<feature type="chain" id="PRO_1000200780" description="Multidrug resistance protein MdtG">
    <location>
        <begin position="1"/>
        <end position="408"/>
    </location>
</feature>
<feature type="transmembrane region" description="Helical" evidence="1">
    <location>
        <begin position="16"/>
        <end position="36"/>
    </location>
</feature>
<feature type="transmembrane region" description="Helical" evidence="1">
    <location>
        <begin position="58"/>
        <end position="78"/>
    </location>
</feature>
<feature type="transmembrane region" description="Helical" evidence="1">
    <location>
        <begin position="92"/>
        <end position="112"/>
    </location>
</feature>
<feature type="transmembrane region" description="Helical" evidence="1">
    <location>
        <begin position="115"/>
        <end position="135"/>
    </location>
</feature>
<feature type="transmembrane region" description="Helical" evidence="1">
    <location>
        <begin position="146"/>
        <end position="166"/>
    </location>
</feature>
<feature type="transmembrane region" description="Helical" evidence="1">
    <location>
        <begin position="173"/>
        <end position="193"/>
    </location>
</feature>
<feature type="transmembrane region" description="Helical" evidence="1">
    <location>
        <begin position="224"/>
        <end position="244"/>
    </location>
</feature>
<feature type="transmembrane region" description="Helical" evidence="1">
    <location>
        <begin position="256"/>
        <end position="276"/>
    </location>
</feature>
<feature type="transmembrane region" description="Helical" evidence="1">
    <location>
        <begin position="290"/>
        <end position="310"/>
    </location>
</feature>
<feature type="transmembrane region" description="Helical" evidence="1">
    <location>
        <begin position="319"/>
        <end position="339"/>
    </location>
</feature>
<feature type="transmembrane region" description="Helical" evidence="1">
    <location>
        <begin position="378"/>
        <end position="398"/>
    </location>
</feature>
<organism>
    <name type="scientific">Escherichia coli (strain SE11)</name>
    <dbReference type="NCBI Taxonomy" id="409438"/>
    <lineage>
        <taxon>Bacteria</taxon>
        <taxon>Pseudomonadati</taxon>
        <taxon>Pseudomonadota</taxon>
        <taxon>Gammaproteobacteria</taxon>
        <taxon>Enterobacterales</taxon>
        <taxon>Enterobacteriaceae</taxon>
        <taxon>Escherichia</taxon>
    </lineage>
</organism>
<dbReference type="EMBL" id="AP009240">
    <property type="protein sequence ID" value="BAG76640.1"/>
    <property type="molecule type" value="Genomic_DNA"/>
</dbReference>
<dbReference type="RefSeq" id="WP_000074172.1">
    <property type="nucleotide sequence ID" value="NC_011415.1"/>
</dbReference>
<dbReference type="SMR" id="B6I9D0"/>
<dbReference type="CARD" id="ARO:3001329">
    <property type="molecule name" value="mdtG"/>
    <property type="mechanism identifier" value="ARO:0010000"/>
    <property type="mechanism name" value="antibiotic efflux"/>
</dbReference>
<dbReference type="GeneID" id="75203640"/>
<dbReference type="KEGG" id="ecy:ECSE_1116"/>
<dbReference type="HOGENOM" id="CLU_001265_57_3_6"/>
<dbReference type="Proteomes" id="UP000008199">
    <property type="component" value="Chromosome"/>
</dbReference>
<dbReference type="GO" id="GO:0005886">
    <property type="term" value="C:plasma membrane"/>
    <property type="evidence" value="ECO:0007669"/>
    <property type="project" value="UniProtKB-SubCell"/>
</dbReference>
<dbReference type="GO" id="GO:0022857">
    <property type="term" value="F:transmembrane transporter activity"/>
    <property type="evidence" value="ECO:0007669"/>
    <property type="project" value="UniProtKB-UniRule"/>
</dbReference>
<dbReference type="GO" id="GO:0046677">
    <property type="term" value="P:response to antibiotic"/>
    <property type="evidence" value="ECO:0007669"/>
    <property type="project" value="UniProtKB-KW"/>
</dbReference>
<dbReference type="CDD" id="cd17391">
    <property type="entry name" value="MFS_MdtG_MDR_like"/>
    <property type="match status" value="1"/>
</dbReference>
<dbReference type="FunFam" id="1.20.1250.20:FF:000020">
    <property type="entry name" value="Multidrug resistance protein MdtG"/>
    <property type="match status" value="1"/>
</dbReference>
<dbReference type="FunFam" id="1.20.1250.20:FF:000022">
    <property type="entry name" value="Multidrug resistance protein MdtG"/>
    <property type="match status" value="1"/>
</dbReference>
<dbReference type="Gene3D" id="1.20.1250.20">
    <property type="entry name" value="MFS general substrate transporter like domains"/>
    <property type="match status" value="2"/>
</dbReference>
<dbReference type="HAMAP" id="MF_01528">
    <property type="entry name" value="MFS_MdtG"/>
    <property type="match status" value="1"/>
</dbReference>
<dbReference type="InterPro" id="IPR011701">
    <property type="entry name" value="MFS"/>
</dbReference>
<dbReference type="InterPro" id="IPR020846">
    <property type="entry name" value="MFS_dom"/>
</dbReference>
<dbReference type="InterPro" id="IPR050497">
    <property type="entry name" value="MFS_MdtG_subfamily"/>
</dbReference>
<dbReference type="InterPro" id="IPR036259">
    <property type="entry name" value="MFS_trans_sf"/>
</dbReference>
<dbReference type="InterPro" id="IPR023692">
    <property type="entry name" value="Mutidrug-R_MdtG"/>
</dbReference>
<dbReference type="InterPro" id="IPR001958">
    <property type="entry name" value="Tet-R_TetA/multi-R_MdtG-like"/>
</dbReference>
<dbReference type="NCBIfam" id="NF007372">
    <property type="entry name" value="PRK09874.1"/>
    <property type="match status" value="1"/>
</dbReference>
<dbReference type="PANTHER" id="PTHR43414">
    <property type="entry name" value="MULTIDRUG RESISTANCE PROTEIN MDTG"/>
    <property type="match status" value="1"/>
</dbReference>
<dbReference type="PANTHER" id="PTHR43414:SF6">
    <property type="entry name" value="MULTIDRUG RESISTANCE PROTEIN MDTG"/>
    <property type="match status" value="1"/>
</dbReference>
<dbReference type="Pfam" id="PF07690">
    <property type="entry name" value="MFS_1"/>
    <property type="match status" value="1"/>
</dbReference>
<dbReference type="PRINTS" id="PR01035">
    <property type="entry name" value="TCRTETA"/>
</dbReference>
<dbReference type="SUPFAM" id="SSF103473">
    <property type="entry name" value="MFS general substrate transporter"/>
    <property type="match status" value="1"/>
</dbReference>
<dbReference type="PROSITE" id="PS50850">
    <property type="entry name" value="MFS"/>
    <property type="match status" value="1"/>
</dbReference>
<gene>
    <name evidence="1" type="primary">mdtG</name>
    <name type="ordered locus">ECSE_1116</name>
</gene>
<reference key="1">
    <citation type="journal article" date="2008" name="DNA Res.">
        <title>Complete genome sequence and comparative analysis of the wild-type commensal Escherichia coli strain SE11 isolated from a healthy adult.</title>
        <authorList>
            <person name="Oshima K."/>
            <person name="Toh H."/>
            <person name="Ogura Y."/>
            <person name="Sasamoto H."/>
            <person name="Morita H."/>
            <person name="Park S.-H."/>
            <person name="Ooka T."/>
            <person name="Iyoda S."/>
            <person name="Taylor T.D."/>
            <person name="Hayashi T."/>
            <person name="Itoh K."/>
            <person name="Hattori M."/>
        </authorList>
    </citation>
    <scope>NUCLEOTIDE SEQUENCE [LARGE SCALE GENOMIC DNA]</scope>
    <source>
        <strain>SE11</strain>
    </source>
</reference>
<accession>B6I9D0</accession>
<proteinExistence type="inferred from homology"/>
<evidence type="ECO:0000255" key="1">
    <source>
        <dbReference type="HAMAP-Rule" id="MF_01528"/>
    </source>
</evidence>
<name>MDTG_ECOSE</name>
<comment type="function">
    <text evidence="1">Confers resistance to fosfomycin and deoxycholate.</text>
</comment>
<comment type="subcellular location">
    <subcellularLocation>
        <location evidence="1">Cell inner membrane</location>
        <topology evidence="1">Multi-pass membrane protein</topology>
    </subcellularLocation>
</comment>
<comment type="similarity">
    <text evidence="1">Belongs to the major facilitator superfamily. DHA1 family. MdtG (TC 2.A.1.2.20) subfamily.</text>
</comment>
<protein>
    <recommendedName>
        <fullName evidence="1">Multidrug resistance protein MdtG</fullName>
    </recommendedName>
</protein>
<sequence length="408" mass="43867">MSPCENDTPINWKRNLIVAWLGCFLTGAAFSLVMPFLPLYVEQLGVTGHSALNMWSGIVFSITFLFSAIASPFWGGLADRKGRKLMLLRSALGMGIVMVLMGLAQNIWQFLILRALLGLLGGFVPNANALIATQVPRNKSGWALGTLSTGGVSGALLGPMAGGLLADSYGLRPVFFITASVLILCFFVTLFCIREKFQPVSKKEMLHMREVVTSLKNPKLVLSLFVTTLIIQVATGSIAPILTLYVRELAGNVSNVAFISGMIASVPGVAALLSAPRLGKLGDRIGPEKILITALIFSVLLLIPMSYVQTPLQLGILRFLLGAADGALLPAVQTLLVYNSSNQIAGRIFSYNQSFRDIGNVTGPLMGAAISANYGFRAVFLVTAGVVLFNAVYSWNSLRRRRIPQVSN</sequence>
<keyword id="KW-0046">Antibiotic resistance</keyword>
<keyword id="KW-0997">Cell inner membrane</keyword>
<keyword id="KW-1003">Cell membrane</keyword>
<keyword id="KW-0472">Membrane</keyword>
<keyword id="KW-0812">Transmembrane</keyword>
<keyword id="KW-1133">Transmembrane helix</keyword>
<keyword id="KW-0813">Transport</keyword>